<evidence type="ECO:0000255" key="1">
    <source>
        <dbReference type="HAMAP-Rule" id="MF_00368"/>
    </source>
</evidence>
<evidence type="ECO:0000305" key="2"/>
<name>RL7_THISH</name>
<feature type="chain" id="PRO_1000195824" description="Large ribosomal subunit protein bL12">
    <location>
        <begin position="1"/>
        <end position="125"/>
    </location>
</feature>
<keyword id="KW-1185">Reference proteome</keyword>
<keyword id="KW-0687">Ribonucleoprotein</keyword>
<keyword id="KW-0689">Ribosomal protein</keyword>
<protein>
    <recommendedName>
        <fullName evidence="1">Large ribosomal subunit protein bL12</fullName>
    </recommendedName>
    <alternativeName>
        <fullName evidence="2">50S ribosomal protein L7/L12</fullName>
    </alternativeName>
</protein>
<gene>
    <name evidence="1" type="primary">rplL</name>
    <name type="ordered locus">Tgr7_2332</name>
</gene>
<organism>
    <name type="scientific">Thioalkalivibrio sulfidiphilus (strain HL-EbGR7)</name>
    <dbReference type="NCBI Taxonomy" id="396588"/>
    <lineage>
        <taxon>Bacteria</taxon>
        <taxon>Pseudomonadati</taxon>
        <taxon>Pseudomonadota</taxon>
        <taxon>Gammaproteobacteria</taxon>
        <taxon>Chromatiales</taxon>
        <taxon>Ectothiorhodospiraceae</taxon>
        <taxon>Thioalkalivibrio</taxon>
    </lineage>
</organism>
<comment type="function">
    <text evidence="1">Forms part of the ribosomal stalk which helps the ribosome interact with GTP-bound translation factors. Is thus essential for accurate translation.</text>
</comment>
<comment type="subunit">
    <text evidence="1">Homodimer. Part of the ribosomal stalk of the 50S ribosomal subunit. Forms a multimeric L10(L12)X complex, where L10 forms an elongated spine to which 2 to 4 L12 dimers bind in a sequential fashion. Binds GTP-bound translation factors.</text>
</comment>
<comment type="similarity">
    <text evidence="1">Belongs to the bacterial ribosomal protein bL12 family.</text>
</comment>
<reference key="1">
    <citation type="journal article" date="2011" name="Stand. Genomic Sci.">
        <title>Complete genome sequence of 'Thioalkalivibrio sulfidophilus' HL-EbGr7.</title>
        <authorList>
            <person name="Muyzer G."/>
            <person name="Sorokin D.Y."/>
            <person name="Mavromatis K."/>
            <person name="Lapidus A."/>
            <person name="Clum A."/>
            <person name="Ivanova N."/>
            <person name="Pati A."/>
            <person name="d'Haeseleer P."/>
            <person name="Woyke T."/>
            <person name="Kyrpides N.C."/>
        </authorList>
    </citation>
    <scope>NUCLEOTIDE SEQUENCE [LARGE SCALE GENOMIC DNA]</scope>
    <source>
        <strain>HL-EbGR7</strain>
    </source>
</reference>
<dbReference type="EMBL" id="CP001339">
    <property type="protein sequence ID" value="ACL73412.1"/>
    <property type="molecule type" value="Genomic_DNA"/>
</dbReference>
<dbReference type="RefSeq" id="WP_012638888.1">
    <property type="nucleotide sequence ID" value="NC_011901.1"/>
</dbReference>
<dbReference type="SMR" id="B8GV66"/>
<dbReference type="STRING" id="396588.Tgr7_2332"/>
<dbReference type="KEGG" id="tgr:Tgr7_2332"/>
<dbReference type="eggNOG" id="COG0222">
    <property type="taxonomic scope" value="Bacteria"/>
</dbReference>
<dbReference type="HOGENOM" id="CLU_086499_3_0_6"/>
<dbReference type="OrthoDB" id="9811748at2"/>
<dbReference type="Proteomes" id="UP000002383">
    <property type="component" value="Chromosome"/>
</dbReference>
<dbReference type="GO" id="GO:0022625">
    <property type="term" value="C:cytosolic large ribosomal subunit"/>
    <property type="evidence" value="ECO:0007669"/>
    <property type="project" value="TreeGrafter"/>
</dbReference>
<dbReference type="GO" id="GO:0003729">
    <property type="term" value="F:mRNA binding"/>
    <property type="evidence" value="ECO:0007669"/>
    <property type="project" value="TreeGrafter"/>
</dbReference>
<dbReference type="GO" id="GO:0003735">
    <property type="term" value="F:structural constituent of ribosome"/>
    <property type="evidence" value="ECO:0007669"/>
    <property type="project" value="InterPro"/>
</dbReference>
<dbReference type="GO" id="GO:0006412">
    <property type="term" value="P:translation"/>
    <property type="evidence" value="ECO:0007669"/>
    <property type="project" value="UniProtKB-UniRule"/>
</dbReference>
<dbReference type="CDD" id="cd00387">
    <property type="entry name" value="Ribosomal_L7_L12"/>
    <property type="match status" value="1"/>
</dbReference>
<dbReference type="FunFam" id="3.30.1390.10:FF:000001">
    <property type="entry name" value="50S ribosomal protein L7/L12"/>
    <property type="match status" value="1"/>
</dbReference>
<dbReference type="Gene3D" id="3.30.1390.10">
    <property type="match status" value="1"/>
</dbReference>
<dbReference type="Gene3D" id="1.20.5.710">
    <property type="entry name" value="Single helix bin"/>
    <property type="match status" value="1"/>
</dbReference>
<dbReference type="HAMAP" id="MF_00368">
    <property type="entry name" value="Ribosomal_bL12"/>
    <property type="match status" value="1"/>
</dbReference>
<dbReference type="InterPro" id="IPR000206">
    <property type="entry name" value="Ribosomal_bL12"/>
</dbReference>
<dbReference type="InterPro" id="IPR013823">
    <property type="entry name" value="Ribosomal_bL12_C"/>
</dbReference>
<dbReference type="InterPro" id="IPR014719">
    <property type="entry name" value="Ribosomal_bL12_C/ClpS-like"/>
</dbReference>
<dbReference type="InterPro" id="IPR008932">
    <property type="entry name" value="Ribosomal_bL12_oligo"/>
</dbReference>
<dbReference type="InterPro" id="IPR036235">
    <property type="entry name" value="Ribosomal_bL12_oligo_N_sf"/>
</dbReference>
<dbReference type="NCBIfam" id="TIGR00855">
    <property type="entry name" value="L12"/>
    <property type="match status" value="1"/>
</dbReference>
<dbReference type="PANTHER" id="PTHR45987">
    <property type="entry name" value="39S RIBOSOMAL PROTEIN L12"/>
    <property type="match status" value="1"/>
</dbReference>
<dbReference type="PANTHER" id="PTHR45987:SF4">
    <property type="entry name" value="LARGE RIBOSOMAL SUBUNIT PROTEIN BL12M"/>
    <property type="match status" value="1"/>
</dbReference>
<dbReference type="Pfam" id="PF00542">
    <property type="entry name" value="Ribosomal_L12"/>
    <property type="match status" value="1"/>
</dbReference>
<dbReference type="Pfam" id="PF16320">
    <property type="entry name" value="Ribosomal_L12_N"/>
    <property type="match status" value="1"/>
</dbReference>
<dbReference type="SUPFAM" id="SSF54736">
    <property type="entry name" value="ClpS-like"/>
    <property type="match status" value="1"/>
</dbReference>
<dbReference type="SUPFAM" id="SSF48300">
    <property type="entry name" value="Ribosomal protein L7/12, oligomerisation (N-terminal) domain"/>
    <property type="match status" value="1"/>
</dbReference>
<proteinExistence type="inferred from homology"/>
<sequence length="125" mass="12865">MAVSKEDILETISNMTVLEIVDLISAMEEKFGVSAAAAVAAAPVAAAGGEAAAEVKDEFDVVMTSFGANKVGVIKVIRAITGLGLKEAKDMVEGAPSTVKEGANKDEAEKIKKELEEAGASVELK</sequence>
<accession>B8GV66</accession>